<feature type="chain" id="PRO_1000008944" description="Phosphoadenosine 5'-phosphosulfate reductase">
    <location>
        <begin position="1"/>
        <end position="241"/>
    </location>
</feature>
<feature type="active site" description="Nucleophile; cysteine thiosulfonate intermediate" evidence="1">
    <location>
        <position position="235"/>
    </location>
</feature>
<dbReference type="EC" id="1.8.4.8" evidence="1"/>
<dbReference type="EMBL" id="AM039952">
    <property type="protein sequence ID" value="CAJ25180.1"/>
    <property type="molecule type" value="Genomic_DNA"/>
</dbReference>
<dbReference type="RefSeq" id="WP_008571174.1">
    <property type="nucleotide sequence ID" value="NZ_CP017190.1"/>
</dbReference>
<dbReference type="SMR" id="Q3BPY3"/>
<dbReference type="STRING" id="456327.BJD11_05490"/>
<dbReference type="KEGG" id="xcv:XCV3449"/>
<dbReference type="eggNOG" id="COG0175">
    <property type="taxonomic scope" value="Bacteria"/>
</dbReference>
<dbReference type="HOGENOM" id="CLU_044089_3_0_6"/>
<dbReference type="UniPathway" id="UPA00140">
    <property type="reaction ID" value="UER00206"/>
</dbReference>
<dbReference type="Proteomes" id="UP000007069">
    <property type="component" value="Chromosome"/>
</dbReference>
<dbReference type="GO" id="GO:0005737">
    <property type="term" value="C:cytoplasm"/>
    <property type="evidence" value="ECO:0007669"/>
    <property type="project" value="UniProtKB-SubCell"/>
</dbReference>
<dbReference type="GO" id="GO:0004604">
    <property type="term" value="F:phosphoadenylyl-sulfate reductase (thioredoxin) activity"/>
    <property type="evidence" value="ECO:0007669"/>
    <property type="project" value="UniProtKB-UniRule"/>
</dbReference>
<dbReference type="GO" id="GO:0070814">
    <property type="term" value="P:hydrogen sulfide biosynthetic process"/>
    <property type="evidence" value="ECO:0007669"/>
    <property type="project" value="UniProtKB-UniRule"/>
</dbReference>
<dbReference type="GO" id="GO:0019379">
    <property type="term" value="P:sulfate assimilation, phosphoadenylyl sulfate reduction by phosphoadenylyl-sulfate reductase (thioredoxin)"/>
    <property type="evidence" value="ECO:0007669"/>
    <property type="project" value="UniProtKB-UniRule"/>
</dbReference>
<dbReference type="CDD" id="cd23945">
    <property type="entry name" value="PAPS_reductase"/>
    <property type="match status" value="1"/>
</dbReference>
<dbReference type="FunFam" id="3.40.50.620:FF:000043">
    <property type="entry name" value="Phosphoadenosine phosphosulfate reductase"/>
    <property type="match status" value="1"/>
</dbReference>
<dbReference type="Gene3D" id="3.40.50.620">
    <property type="entry name" value="HUPs"/>
    <property type="match status" value="1"/>
</dbReference>
<dbReference type="HAMAP" id="MF_00063">
    <property type="entry name" value="CysH"/>
    <property type="match status" value="1"/>
</dbReference>
<dbReference type="InterPro" id="IPR004511">
    <property type="entry name" value="PAPS/APS_Rdtase"/>
</dbReference>
<dbReference type="InterPro" id="IPR002500">
    <property type="entry name" value="PAPS_reduct_dom"/>
</dbReference>
<dbReference type="InterPro" id="IPR011800">
    <property type="entry name" value="PAPS_reductase_CysH"/>
</dbReference>
<dbReference type="InterPro" id="IPR014729">
    <property type="entry name" value="Rossmann-like_a/b/a_fold"/>
</dbReference>
<dbReference type="NCBIfam" id="TIGR00434">
    <property type="entry name" value="cysH"/>
    <property type="match status" value="1"/>
</dbReference>
<dbReference type="NCBIfam" id="TIGR02057">
    <property type="entry name" value="PAPS_reductase"/>
    <property type="match status" value="1"/>
</dbReference>
<dbReference type="NCBIfam" id="NF002537">
    <property type="entry name" value="PRK02090.1"/>
    <property type="match status" value="1"/>
</dbReference>
<dbReference type="PANTHER" id="PTHR46509">
    <property type="entry name" value="PHOSPHOADENOSINE PHOSPHOSULFATE REDUCTASE"/>
    <property type="match status" value="1"/>
</dbReference>
<dbReference type="PANTHER" id="PTHR46509:SF1">
    <property type="entry name" value="PHOSPHOADENOSINE PHOSPHOSULFATE REDUCTASE"/>
    <property type="match status" value="1"/>
</dbReference>
<dbReference type="Pfam" id="PF01507">
    <property type="entry name" value="PAPS_reduct"/>
    <property type="match status" value="1"/>
</dbReference>
<dbReference type="PIRSF" id="PIRSF000857">
    <property type="entry name" value="PAPS_reductase"/>
    <property type="match status" value="1"/>
</dbReference>
<dbReference type="SUPFAM" id="SSF52402">
    <property type="entry name" value="Adenine nucleotide alpha hydrolases-like"/>
    <property type="match status" value="1"/>
</dbReference>
<sequence>MTALPAASITSSAFDDLDALNAQLEGLHADQRVAWALQHGPQNAALSSSFGAQSAVTLHLLSQQRPDIPVILIDTGYLFPETYRFADALTERLKLNLKVYRPLVSRAWMEARHGRLWEQGMVGIDQYNNLRKVEPMRRALDELEVGTWFTGLRRSQSGGRAQTPIVQKRGERYKISPIADWTDRDVWQYLQAHDLPYHPLWEQGYVSIGDFHTTRRWEPGMREEDTRFFGLKRECGIHEDI</sequence>
<reference key="1">
    <citation type="journal article" date="2005" name="J. Bacteriol.">
        <title>Insights into genome plasticity and pathogenicity of the plant pathogenic Bacterium Xanthomonas campestris pv. vesicatoria revealed by the complete genome sequence.</title>
        <authorList>
            <person name="Thieme F."/>
            <person name="Koebnik R."/>
            <person name="Bekel T."/>
            <person name="Berger C."/>
            <person name="Boch J."/>
            <person name="Buettner D."/>
            <person name="Caldana C."/>
            <person name="Gaigalat L."/>
            <person name="Goesmann A."/>
            <person name="Kay S."/>
            <person name="Kirchner O."/>
            <person name="Lanz C."/>
            <person name="Linke B."/>
            <person name="McHardy A.C."/>
            <person name="Meyer F."/>
            <person name="Mittenhuber G."/>
            <person name="Nies D.H."/>
            <person name="Niesbach-Kloesgen U."/>
            <person name="Patschkowski T."/>
            <person name="Rueckert C."/>
            <person name="Rupp O."/>
            <person name="Schneiker S."/>
            <person name="Schuster S.C."/>
            <person name="Vorhoelter F.J."/>
            <person name="Weber E."/>
            <person name="Puehler A."/>
            <person name="Bonas U."/>
            <person name="Bartels D."/>
            <person name="Kaiser O."/>
        </authorList>
    </citation>
    <scope>NUCLEOTIDE SEQUENCE [LARGE SCALE GENOMIC DNA]</scope>
    <source>
        <strain>85-10</strain>
    </source>
</reference>
<comment type="function">
    <text evidence="1">Catalyzes the formation of sulfite from phosphoadenosine 5'-phosphosulfate (PAPS) using thioredoxin as an electron donor.</text>
</comment>
<comment type="catalytic activity">
    <reaction evidence="1">
        <text>[thioredoxin]-disulfide + sulfite + adenosine 3',5'-bisphosphate + 2 H(+) = [thioredoxin]-dithiol + 3'-phosphoadenylyl sulfate</text>
        <dbReference type="Rhea" id="RHEA:11724"/>
        <dbReference type="Rhea" id="RHEA-COMP:10698"/>
        <dbReference type="Rhea" id="RHEA-COMP:10700"/>
        <dbReference type="ChEBI" id="CHEBI:15378"/>
        <dbReference type="ChEBI" id="CHEBI:17359"/>
        <dbReference type="ChEBI" id="CHEBI:29950"/>
        <dbReference type="ChEBI" id="CHEBI:50058"/>
        <dbReference type="ChEBI" id="CHEBI:58339"/>
        <dbReference type="ChEBI" id="CHEBI:58343"/>
        <dbReference type="EC" id="1.8.4.8"/>
    </reaction>
</comment>
<comment type="pathway">
    <text evidence="1">Sulfur metabolism; hydrogen sulfide biosynthesis; sulfite from sulfate: step 3/3.</text>
</comment>
<comment type="subcellular location">
    <subcellularLocation>
        <location evidence="1">Cytoplasm</location>
    </subcellularLocation>
</comment>
<comment type="similarity">
    <text evidence="1">Belongs to the PAPS reductase family. CysH subfamily.</text>
</comment>
<protein>
    <recommendedName>
        <fullName evidence="1">Phosphoadenosine 5'-phosphosulfate reductase</fullName>
        <shortName evidence="1">PAPS reductase</shortName>
        <ecNumber evidence="1">1.8.4.8</ecNumber>
    </recommendedName>
    <alternativeName>
        <fullName evidence="1">3'-phosphoadenylylsulfate reductase</fullName>
    </alternativeName>
    <alternativeName>
        <fullName evidence="1">PAPS reductase, thioredoxin dependent</fullName>
    </alternativeName>
    <alternativeName>
        <fullName evidence="1">PAPS sulfotransferase</fullName>
    </alternativeName>
    <alternativeName>
        <fullName evidence="1">PAdoPS reductase</fullName>
    </alternativeName>
</protein>
<evidence type="ECO:0000255" key="1">
    <source>
        <dbReference type="HAMAP-Rule" id="MF_00063"/>
    </source>
</evidence>
<name>CYSH_XANE5</name>
<gene>
    <name evidence="1" type="primary">cysH</name>
    <name type="ordered locus">XCV3449</name>
</gene>
<proteinExistence type="inferred from homology"/>
<organism>
    <name type="scientific">Xanthomonas euvesicatoria pv. vesicatoria (strain 85-10)</name>
    <name type="common">Xanthomonas campestris pv. vesicatoria</name>
    <dbReference type="NCBI Taxonomy" id="316273"/>
    <lineage>
        <taxon>Bacteria</taxon>
        <taxon>Pseudomonadati</taxon>
        <taxon>Pseudomonadota</taxon>
        <taxon>Gammaproteobacteria</taxon>
        <taxon>Lysobacterales</taxon>
        <taxon>Lysobacteraceae</taxon>
        <taxon>Xanthomonas</taxon>
    </lineage>
</organism>
<accession>Q3BPY3</accession>
<keyword id="KW-0963">Cytoplasm</keyword>
<keyword id="KW-0560">Oxidoreductase</keyword>